<sequence>MTTDTHTLHIEEILDLLPHRFPFLLVDRVLDFEEGKFLRAVKNVSFNEPFFQGHFPGKPIFPGVLILEAMAQATGILAFKSRGKLEPGELYYFAGIDEARFKRPVVPGDQMIMEVEFVKERRGLTRFTGVAKVDGEIVCTATMMCARSKPAAPAESVVVKPDVVKPDVVNPVVKES</sequence>
<feature type="chain" id="PRO_0000301940" description="3-hydroxyacyl-[acyl-carrier-protein] dehydratase FabZ">
    <location>
        <begin position="1"/>
        <end position="176"/>
    </location>
</feature>
<feature type="active site" evidence="1">
    <location>
        <position position="54"/>
    </location>
</feature>
<reference key="1">
    <citation type="submission" date="2007-02" db="EMBL/GenBank/DDBJ databases">
        <title>Complete sequence of chromosome of Yersinia pestis Pestoides F.</title>
        <authorList>
            <consortium name="US DOE Joint Genome Institute"/>
            <person name="Copeland A."/>
            <person name="Lucas S."/>
            <person name="Lapidus A."/>
            <person name="Barry K."/>
            <person name="Detter J.C."/>
            <person name="Glavina del Rio T."/>
            <person name="Hammon N."/>
            <person name="Israni S."/>
            <person name="Dalin E."/>
            <person name="Tice H."/>
            <person name="Pitluck S."/>
            <person name="Di Bartolo G."/>
            <person name="Chain P."/>
            <person name="Malfatti S."/>
            <person name="Shin M."/>
            <person name="Vergez L."/>
            <person name="Schmutz J."/>
            <person name="Larimer F."/>
            <person name="Land M."/>
            <person name="Hauser L."/>
            <person name="Worsham P."/>
            <person name="Chu M."/>
            <person name="Bearden S."/>
            <person name="Garcia E."/>
            <person name="Richardson P."/>
        </authorList>
    </citation>
    <scope>NUCLEOTIDE SEQUENCE [LARGE SCALE GENOMIC DNA]</scope>
    <source>
        <strain>Pestoides F</strain>
    </source>
</reference>
<protein>
    <recommendedName>
        <fullName evidence="1">3-hydroxyacyl-[acyl-carrier-protein] dehydratase FabZ</fullName>
        <ecNumber evidence="1">4.2.1.59</ecNumber>
    </recommendedName>
    <alternativeName>
        <fullName evidence="1">(3R)-hydroxymyristoyl-[acyl-carrier-protein] dehydratase</fullName>
        <shortName evidence="1">(3R)-hydroxymyristoyl-ACP dehydrase</shortName>
    </alternativeName>
    <alternativeName>
        <fullName evidence="1">Beta-hydroxyacyl-ACP dehydratase</fullName>
    </alternativeName>
</protein>
<gene>
    <name evidence="1" type="primary">fabZ</name>
    <name type="ordered locus">YPDSF_1657</name>
</gene>
<evidence type="ECO:0000255" key="1">
    <source>
        <dbReference type="HAMAP-Rule" id="MF_00406"/>
    </source>
</evidence>
<proteinExistence type="inferred from homology"/>
<comment type="function">
    <text evidence="1">Involved in unsaturated fatty acids biosynthesis. Catalyzes the dehydration of short chain beta-hydroxyacyl-ACPs and long chain saturated and unsaturated beta-hydroxyacyl-ACPs.</text>
</comment>
<comment type="catalytic activity">
    <reaction evidence="1">
        <text>a (3R)-hydroxyacyl-[ACP] = a (2E)-enoyl-[ACP] + H2O</text>
        <dbReference type="Rhea" id="RHEA:13097"/>
        <dbReference type="Rhea" id="RHEA-COMP:9925"/>
        <dbReference type="Rhea" id="RHEA-COMP:9945"/>
        <dbReference type="ChEBI" id="CHEBI:15377"/>
        <dbReference type="ChEBI" id="CHEBI:78784"/>
        <dbReference type="ChEBI" id="CHEBI:78827"/>
        <dbReference type="EC" id="4.2.1.59"/>
    </reaction>
</comment>
<comment type="subcellular location">
    <subcellularLocation>
        <location evidence="1">Cytoplasm</location>
    </subcellularLocation>
</comment>
<comment type="similarity">
    <text evidence="1">Belongs to the thioester dehydratase family. FabZ subfamily.</text>
</comment>
<organism>
    <name type="scientific">Yersinia pestis (strain Pestoides F)</name>
    <dbReference type="NCBI Taxonomy" id="386656"/>
    <lineage>
        <taxon>Bacteria</taxon>
        <taxon>Pseudomonadati</taxon>
        <taxon>Pseudomonadota</taxon>
        <taxon>Gammaproteobacteria</taxon>
        <taxon>Enterobacterales</taxon>
        <taxon>Yersiniaceae</taxon>
        <taxon>Yersinia</taxon>
    </lineage>
</organism>
<dbReference type="EC" id="4.2.1.59" evidence="1"/>
<dbReference type="EMBL" id="CP000668">
    <property type="protein sequence ID" value="ABP40042.1"/>
    <property type="molecule type" value="Genomic_DNA"/>
</dbReference>
<dbReference type="RefSeq" id="WP_002217656.1">
    <property type="nucleotide sequence ID" value="NZ_CP009715.1"/>
</dbReference>
<dbReference type="SMR" id="A4TL80"/>
<dbReference type="KEGG" id="ypp:YPDSF_1657"/>
<dbReference type="PATRIC" id="fig|386656.14.peg.2105"/>
<dbReference type="GO" id="GO:0005737">
    <property type="term" value="C:cytoplasm"/>
    <property type="evidence" value="ECO:0007669"/>
    <property type="project" value="UniProtKB-SubCell"/>
</dbReference>
<dbReference type="GO" id="GO:0016020">
    <property type="term" value="C:membrane"/>
    <property type="evidence" value="ECO:0007669"/>
    <property type="project" value="GOC"/>
</dbReference>
<dbReference type="GO" id="GO:0019171">
    <property type="term" value="F:(3R)-hydroxyacyl-[acyl-carrier-protein] dehydratase activity"/>
    <property type="evidence" value="ECO:0007669"/>
    <property type="project" value="UniProtKB-EC"/>
</dbReference>
<dbReference type="GO" id="GO:0006633">
    <property type="term" value="P:fatty acid biosynthetic process"/>
    <property type="evidence" value="ECO:0007669"/>
    <property type="project" value="UniProtKB-UniRule"/>
</dbReference>
<dbReference type="GO" id="GO:0009245">
    <property type="term" value="P:lipid A biosynthetic process"/>
    <property type="evidence" value="ECO:0007669"/>
    <property type="project" value="UniProtKB-UniRule"/>
</dbReference>
<dbReference type="CDD" id="cd01288">
    <property type="entry name" value="FabZ"/>
    <property type="match status" value="1"/>
</dbReference>
<dbReference type="FunFam" id="3.10.129.10:FF:000001">
    <property type="entry name" value="3-hydroxyacyl-[acyl-carrier-protein] dehydratase FabZ"/>
    <property type="match status" value="1"/>
</dbReference>
<dbReference type="Gene3D" id="3.10.129.10">
    <property type="entry name" value="Hotdog Thioesterase"/>
    <property type="match status" value="1"/>
</dbReference>
<dbReference type="HAMAP" id="MF_00406">
    <property type="entry name" value="FabZ"/>
    <property type="match status" value="1"/>
</dbReference>
<dbReference type="InterPro" id="IPR013114">
    <property type="entry name" value="FabA_FabZ"/>
</dbReference>
<dbReference type="InterPro" id="IPR010084">
    <property type="entry name" value="FabZ"/>
</dbReference>
<dbReference type="InterPro" id="IPR029069">
    <property type="entry name" value="HotDog_dom_sf"/>
</dbReference>
<dbReference type="NCBIfam" id="TIGR01750">
    <property type="entry name" value="fabZ"/>
    <property type="match status" value="1"/>
</dbReference>
<dbReference type="NCBIfam" id="NF000582">
    <property type="entry name" value="PRK00006.1"/>
    <property type="match status" value="1"/>
</dbReference>
<dbReference type="PANTHER" id="PTHR30272">
    <property type="entry name" value="3-HYDROXYACYL-[ACYL-CARRIER-PROTEIN] DEHYDRATASE"/>
    <property type="match status" value="1"/>
</dbReference>
<dbReference type="PANTHER" id="PTHR30272:SF1">
    <property type="entry name" value="3-HYDROXYACYL-[ACYL-CARRIER-PROTEIN] DEHYDRATASE"/>
    <property type="match status" value="1"/>
</dbReference>
<dbReference type="Pfam" id="PF07977">
    <property type="entry name" value="FabA"/>
    <property type="match status" value="1"/>
</dbReference>
<dbReference type="SUPFAM" id="SSF54637">
    <property type="entry name" value="Thioesterase/thiol ester dehydrase-isomerase"/>
    <property type="match status" value="1"/>
</dbReference>
<accession>A4TL80</accession>
<keyword id="KW-0963">Cytoplasm</keyword>
<keyword id="KW-0441">Lipid A biosynthesis</keyword>
<keyword id="KW-0444">Lipid biosynthesis</keyword>
<keyword id="KW-0443">Lipid metabolism</keyword>
<keyword id="KW-0456">Lyase</keyword>
<name>FABZ_YERPP</name>